<dbReference type="EC" id="6.1.1.5" evidence="1"/>
<dbReference type="EMBL" id="CP000269">
    <property type="protein sequence ID" value="ABR88910.1"/>
    <property type="molecule type" value="Genomic_DNA"/>
</dbReference>
<dbReference type="RefSeq" id="WP_012078692.1">
    <property type="nucleotide sequence ID" value="NC_009659.1"/>
</dbReference>
<dbReference type="SMR" id="A6SW71"/>
<dbReference type="STRING" id="375286.mma_0828"/>
<dbReference type="KEGG" id="mms:mma_0828"/>
<dbReference type="eggNOG" id="COG0060">
    <property type="taxonomic scope" value="Bacteria"/>
</dbReference>
<dbReference type="HOGENOM" id="CLU_001493_7_1_4"/>
<dbReference type="OrthoDB" id="9810365at2"/>
<dbReference type="Proteomes" id="UP000006388">
    <property type="component" value="Chromosome"/>
</dbReference>
<dbReference type="GO" id="GO:0005829">
    <property type="term" value="C:cytosol"/>
    <property type="evidence" value="ECO:0007669"/>
    <property type="project" value="TreeGrafter"/>
</dbReference>
<dbReference type="GO" id="GO:0002161">
    <property type="term" value="F:aminoacyl-tRNA deacylase activity"/>
    <property type="evidence" value="ECO:0007669"/>
    <property type="project" value="InterPro"/>
</dbReference>
<dbReference type="GO" id="GO:0005524">
    <property type="term" value="F:ATP binding"/>
    <property type="evidence" value="ECO:0007669"/>
    <property type="project" value="UniProtKB-UniRule"/>
</dbReference>
<dbReference type="GO" id="GO:0004822">
    <property type="term" value="F:isoleucine-tRNA ligase activity"/>
    <property type="evidence" value="ECO:0007669"/>
    <property type="project" value="UniProtKB-UniRule"/>
</dbReference>
<dbReference type="GO" id="GO:0000049">
    <property type="term" value="F:tRNA binding"/>
    <property type="evidence" value="ECO:0007669"/>
    <property type="project" value="InterPro"/>
</dbReference>
<dbReference type="GO" id="GO:0008270">
    <property type="term" value="F:zinc ion binding"/>
    <property type="evidence" value="ECO:0007669"/>
    <property type="project" value="UniProtKB-UniRule"/>
</dbReference>
<dbReference type="GO" id="GO:0006428">
    <property type="term" value="P:isoleucyl-tRNA aminoacylation"/>
    <property type="evidence" value="ECO:0007669"/>
    <property type="project" value="UniProtKB-UniRule"/>
</dbReference>
<dbReference type="CDD" id="cd07960">
    <property type="entry name" value="Anticodon_Ia_Ile_BEm"/>
    <property type="match status" value="1"/>
</dbReference>
<dbReference type="CDD" id="cd00818">
    <property type="entry name" value="IleRS_core"/>
    <property type="match status" value="1"/>
</dbReference>
<dbReference type="FunFam" id="3.40.50.620:FF:000042">
    <property type="entry name" value="Isoleucine--tRNA ligase"/>
    <property type="match status" value="1"/>
</dbReference>
<dbReference type="FunFam" id="3.40.50.620:FF:000048">
    <property type="entry name" value="Isoleucine--tRNA ligase"/>
    <property type="match status" value="1"/>
</dbReference>
<dbReference type="Gene3D" id="1.10.730.20">
    <property type="match status" value="1"/>
</dbReference>
<dbReference type="Gene3D" id="3.40.50.620">
    <property type="entry name" value="HUPs"/>
    <property type="match status" value="2"/>
</dbReference>
<dbReference type="Gene3D" id="3.90.740.10">
    <property type="entry name" value="Valyl/Leucyl/Isoleucyl-tRNA synthetase, editing domain"/>
    <property type="match status" value="1"/>
</dbReference>
<dbReference type="HAMAP" id="MF_02002">
    <property type="entry name" value="Ile_tRNA_synth_type1"/>
    <property type="match status" value="1"/>
</dbReference>
<dbReference type="InterPro" id="IPR001412">
    <property type="entry name" value="aa-tRNA-synth_I_CS"/>
</dbReference>
<dbReference type="InterPro" id="IPR002300">
    <property type="entry name" value="aa-tRNA-synth_Ia"/>
</dbReference>
<dbReference type="InterPro" id="IPR033708">
    <property type="entry name" value="Anticodon_Ile_BEm"/>
</dbReference>
<dbReference type="InterPro" id="IPR002301">
    <property type="entry name" value="Ile-tRNA-ligase"/>
</dbReference>
<dbReference type="InterPro" id="IPR023585">
    <property type="entry name" value="Ile-tRNA-ligase_type1"/>
</dbReference>
<dbReference type="InterPro" id="IPR050081">
    <property type="entry name" value="Ile-tRNA_ligase"/>
</dbReference>
<dbReference type="InterPro" id="IPR013155">
    <property type="entry name" value="M/V/L/I-tRNA-synth_anticd-bd"/>
</dbReference>
<dbReference type="InterPro" id="IPR014729">
    <property type="entry name" value="Rossmann-like_a/b/a_fold"/>
</dbReference>
<dbReference type="InterPro" id="IPR009080">
    <property type="entry name" value="tRNAsynth_Ia_anticodon-bd"/>
</dbReference>
<dbReference type="InterPro" id="IPR009008">
    <property type="entry name" value="Val/Leu/Ile-tRNA-synth_edit"/>
</dbReference>
<dbReference type="InterPro" id="IPR010663">
    <property type="entry name" value="Znf_FPG/IleRS"/>
</dbReference>
<dbReference type="NCBIfam" id="TIGR00392">
    <property type="entry name" value="ileS"/>
    <property type="match status" value="1"/>
</dbReference>
<dbReference type="PANTHER" id="PTHR42765:SF1">
    <property type="entry name" value="ISOLEUCINE--TRNA LIGASE, MITOCHONDRIAL"/>
    <property type="match status" value="1"/>
</dbReference>
<dbReference type="PANTHER" id="PTHR42765">
    <property type="entry name" value="SOLEUCYL-TRNA SYNTHETASE"/>
    <property type="match status" value="1"/>
</dbReference>
<dbReference type="Pfam" id="PF08264">
    <property type="entry name" value="Anticodon_1"/>
    <property type="match status" value="1"/>
</dbReference>
<dbReference type="Pfam" id="PF00133">
    <property type="entry name" value="tRNA-synt_1"/>
    <property type="match status" value="1"/>
</dbReference>
<dbReference type="Pfam" id="PF06827">
    <property type="entry name" value="zf-FPG_IleRS"/>
    <property type="match status" value="1"/>
</dbReference>
<dbReference type="PRINTS" id="PR00984">
    <property type="entry name" value="TRNASYNTHILE"/>
</dbReference>
<dbReference type="SUPFAM" id="SSF47323">
    <property type="entry name" value="Anticodon-binding domain of a subclass of class I aminoacyl-tRNA synthetases"/>
    <property type="match status" value="1"/>
</dbReference>
<dbReference type="SUPFAM" id="SSF52374">
    <property type="entry name" value="Nucleotidylyl transferase"/>
    <property type="match status" value="1"/>
</dbReference>
<dbReference type="SUPFAM" id="SSF50677">
    <property type="entry name" value="ValRS/IleRS/LeuRS editing domain"/>
    <property type="match status" value="1"/>
</dbReference>
<dbReference type="PROSITE" id="PS00178">
    <property type="entry name" value="AA_TRNA_LIGASE_I"/>
    <property type="match status" value="1"/>
</dbReference>
<sequence length="958" mass="106938">MSDNQNKPGKPAAKPQSKYPVNMTDTPFPMRGDLAKREPQWVKQWQDQKVYEKIRKASKGRPKFILHDGPPYANGDIHLGHAVNKILKDMIVKTRQFDGFDAPYVPGWDCHGMPIEIQIEKQFGKNLPTAEVLSKARAYANEQVERQKKDFIRLGVLGQWDKPYKTMDFGNEADELRALGSLLEKGYVYRGLKPVNWCFDCGSALAEAEVEYQDKRDPAIDVGFPFAEPEKVAKAFGLAKLPTNKGYAIIWTTTPWTIPANQALNVHGDLPYALVNVVRNGVPQLLILAADLVGTVLQRCGLTGETIAICEGSALEGIRFKHPFADLDPGYNRESPIYLATYVAADSGTGIVHSAPAYGIEDFISCKSHGMRDDEIIAPVMGDGKYASWLPLFGGLTIWEASKPICAKLDEVGSLFKLVMFDHSYMHCWRHKTPIIYRATSQWFAGMDVMPKNQGATLRETALQAIEETEFFPSWGKARLHGMIANRPDWTLSRQRQWGVPMAFFVHKETGDLHPRTPELLEQIAQRVEKDGIEAWLTLDPKELLGADADMYLKNKDTLDVWFDSGCTHQTVLRGSHKEELAFPADLYLEGSDQHRGWFHSSLLTSSMMNGRAPYKALLTHGFTVDGEGKKMSKSLGNTLAPQKISDTLGADILRLWIASTDYSGELSISDEILKRVTESYRRIRNTVRFLLSNTSDFDAAKDLVPVADMLEIDRYAVAQMNAMQAEILAHYKVYEFHPVVSKLQMYCSEDLGGFYLDILKDRLYTSGVTSHARRSAQSAIWHLTHSLLRLMAPILSFTAEEAWAVFASPDVNTDGTIFTHTFYQLPEVSDGAALLAKYTLLREVRNDVTKQLEEVRVAGGIGSSLQAEVELKASGDKFAALASLDDDLKFVLITSQAGVSQVASAEEESVVVTPSTYQKCERCWHYRADVGSHAEHEGLCGRCVANLFGKGEARRFA</sequence>
<comment type="function">
    <text evidence="1">Catalyzes the attachment of isoleucine to tRNA(Ile). As IleRS can inadvertently accommodate and process structurally similar amino acids such as valine, to avoid such errors it has two additional distinct tRNA(Ile)-dependent editing activities. One activity is designated as 'pretransfer' editing and involves the hydrolysis of activated Val-AMP. The other activity is designated 'posttransfer' editing and involves deacylation of mischarged Val-tRNA(Ile).</text>
</comment>
<comment type="catalytic activity">
    <reaction evidence="1">
        <text>tRNA(Ile) + L-isoleucine + ATP = L-isoleucyl-tRNA(Ile) + AMP + diphosphate</text>
        <dbReference type="Rhea" id="RHEA:11060"/>
        <dbReference type="Rhea" id="RHEA-COMP:9666"/>
        <dbReference type="Rhea" id="RHEA-COMP:9695"/>
        <dbReference type="ChEBI" id="CHEBI:30616"/>
        <dbReference type="ChEBI" id="CHEBI:33019"/>
        <dbReference type="ChEBI" id="CHEBI:58045"/>
        <dbReference type="ChEBI" id="CHEBI:78442"/>
        <dbReference type="ChEBI" id="CHEBI:78528"/>
        <dbReference type="ChEBI" id="CHEBI:456215"/>
        <dbReference type="EC" id="6.1.1.5"/>
    </reaction>
</comment>
<comment type="cofactor">
    <cofactor evidence="1">
        <name>Zn(2+)</name>
        <dbReference type="ChEBI" id="CHEBI:29105"/>
    </cofactor>
    <text evidence="1">Binds 1 zinc ion per subunit.</text>
</comment>
<comment type="subunit">
    <text evidence="1">Monomer.</text>
</comment>
<comment type="subcellular location">
    <subcellularLocation>
        <location evidence="1">Cytoplasm</location>
    </subcellularLocation>
</comment>
<comment type="domain">
    <text evidence="1">IleRS has two distinct active sites: one for aminoacylation and one for editing. The misactivated valine is translocated from the active site to the editing site, which sterically excludes the correctly activated isoleucine. The single editing site contains two valyl binding pockets, one specific for each substrate (Val-AMP or Val-tRNA(Ile)).</text>
</comment>
<comment type="similarity">
    <text evidence="1">Belongs to the class-I aminoacyl-tRNA synthetase family. IleS type 1 subfamily.</text>
</comment>
<organism>
    <name type="scientific">Janthinobacterium sp. (strain Marseille)</name>
    <name type="common">Minibacterium massiliensis</name>
    <dbReference type="NCBI Taxonomy" id="375286"/>
    <lineage>
        <taxon>Bacteria</taxon>
        <taxon>Pseudomonadati</taxon>
        <taxon>Pseudomonadota</taxon>
        <taxon>Betaproteobacteria</taxon>
        <taxon>Burkholderiales</taxon>
        <taxon>Oxalobacteraceae</taxon>
        <taxon>Janthinobacterium</taxon>
    </lineage>
</organism>
<name>SYI_JANMA</name>
<reference key="1">
    <citation type="journal article" date="2007" name="PLoS Genet.">
        <title>Genome analysis of Minibacterium massiliensis highlights the convergent evolution of water-living bacteria.</title>
        <authorList>
            <person name="Audic S."/>
            <person name="Robert C."/>
            <person name="Campagna B."/>
            <person name="Parinello H."/>
            <person name="Claverie J.-M."/>
            <person name="Raoult D."/>
            <person name="Drancourt M."/>
        </authorList>
    </citation>
    <scope>NUCLEOTIDE SEQUENCE [LARGE SCALE GENOMIC DNA]</scope>
    <source>
        <strain>Marseille</strain>
    </source>
</reference>
<gene>
    <name evidence="1" type="primary">ileS</name>
    <name type="ordered locus">mma_0828</name>
</gene>
<keyword id="KW-0030">Aminoacyl-tRNA synthetase</keyword>
<keyword id="KW-0067">ATP-binding</keyword>
<keyword id="KW-0963">Cytoplasm</keyword>
<keyword id="KW-0436">Ligase</keyword>
<keyword id="KW-0479">Metal-binding</keyword>
<keyword id="KW-0547">Nucleotide-binding</keyword>
<keyword id="KW-0648">Protein biosynthesis</keyword>
<keyword id="KW-0862">Zinc</keyword>
<feature type="chain" id="PRO_1000022080" description="Isoleucine--tRNA ligase">
    <location>
        <begin position="1"/>
        <end position="958"/>
    </location>
</feature>
<feature type="region of interest" description="Disordered" evidence="2">
    <location>
        <begin position="1"/>
        <end position="32"/>
    </location>
</feature>
<feature type="short sequence motif" description="'HIGH' region">
    <location>
        <begin position="71"/>
        <end position="81"/>
    </location>
</feature>
<feature type="short sequence motif" description="'KMSKS' region">
    <location>
        <begin position="631"/>
        <end position="635"/>
    </location>
</feature>
<feature type="binding site" evidence="1">
    <location>
        <position position="590"/>
    </location>
    <ligand>
        <name>L-isoleucyl-5'-AMP</name>
        <dbReference type="ChEBI" id="CHEBI:178002"/>
    </ligand>
</feature>
<feature type="binding site" evidence="1">
    <location>
        <position position="634"/>
    </location>
    <ligand>
        <name>ATP</name>
        <dbReference type="ChEBI" id="CHEBI:30616"/>
    </ligand>
</feature>
<feature type="binding site" evidence="1">
    <location>
        <position position="921"/>
    </location>
    <ligand>
        <name>Zn(2+)</name>
        <dbReference type="ChEBI" id="CHEBI:29105"/>
    </ligand>
</feature>
<feature type="binding site" evidence="1">
    <location>
        <position position="924"/>
    </location>
    <ligand>
        <name>Zn(2+)</name>
        <dbReference type="ChEBI" id="CHEBI:29105"/>
    </ligand>
</feature>
<feature type="binding site" evidence="1">
    <location>
        <position position="941"/>
    </location>
    <ligand>
        <name>Zn(2+)</name>
        <dbReference type="ChEBI" id="CHEBI:29105"/>
    </ligand>
</feature>
<feature type="binding site" evidence="1">
    <location>
        <position position="944"/>
    </location>
    <ligand>
        <name>Zn(2+)</name>
        <dbReference type="ChEBI" id="CHEBI:29105"/>
    </ligand>
</feature>
<accession>A6SW71</accession>
<evidence type="ECO:0000255" key="1">
    <source>
        <dbReference type="HAMAP-Rule" id="MF_02002"/>
    </source>
</evidence>
<evidence type="ECO:0000256" key="2">
    <source>
        <dbReference type="SAM" id="MobiDB-lite"/>
    </source>
</evidence>
<proteinExistence type="inferred from homology"/>
<protein>
    <recommendedName>
        <fullName evidence="1">Isoleucine--tRNA ligase</fullName>
        <ecNumber evidence="1">6.1.1.5</ecNumber>
    </recommendedName>
    <alternativeName>
        <fullName evidence="1">Isoleucyl-tRNA synthetase</fullName>
        <shortName evidence="1">IleRS</shortName>
    </alternativeName>
</protein>